<sequence>MSRLAECTISDTVDELVQRAKLAEQAERYDDMAGACKTMAEMGNELNNEERNLLSVAYKNVLGARRSSWRIMSSIAKKQAGTPLADQTDIYLKKVEEELIPICNDVLALPVLPITEKIGAEAKIFYYKMMGDYYRYLAEVQEGEQNDKSTEAAEEANQKATSLAEAELSVTHPIRLGLALNFSVFYYEIKNMPEKACSLAKAAFDAAITEVDSIKDETYKDSTLIMQLLRDNLTLWNSECETDS</sequence>
<evidence type="ECO:0000305" key="1"/>
<dbReference type="EMBL" id="U63643">
    <property type="protein sequence ID" value="AAC48315.2"/>
    <property type="molecule type" value="mRNA"/>
</dbReference>
<dbReference type="SMR" id="Q24902"/>
<dbReference type="Gene3D" id="1.20.190.20">
    <property type="entry name" value="14-3-3 domain"/>
    <property type="match status" value="1"/>
</dbReference>
<dbReference type="InterPro" id="IPR000308">
    <property type="entry name" value="14-3-3"/>
</dbReference>
<dbReference type="InterPro" id="IPR023409">
    <property type="entry name" value="14-3-3_CS"/>
</dbReference>
<dbReference type="InterPro" id="IPR036815">
    <property type="entry name" value="14-3-3_dom_sf"/>
</dbReference>
<dbReference type="InterPro" id="IPR023410">
    <property type="entry name" value="14-3-3_domain"/>
</dbReference>
<dbReference type="PANTHER" id="PTHR18860">
    <property type="entry name" value="14-3-3 PROTEIN"/>
    <property type="match status" value="1"/>
</dbReference>
<dbReference type="Pfam" id="PF00244">
    <property type="entry name" value="14-3-3"/>
    <property type="match status" value="1"/>
</dbReference>
<dbReference type="PIRSF" id="PIRSF000868">
    <property type="entry name" value="14-3-3"/>
    <property type="match status" value="1"/>
</dbReference>
<dbReference type="PRINTS" id="PR00305">
    <property type="entry name" value="1433ZETA"/>
</dbReference>
<dbReference type="SMART" id="SM00101">
    <property type="entry name" value="14_3_3"/>
    <property type="match status" value="1"/>
</dbReference>
<dbReference type="SUPFAM" id="SSF48445">
    <property type="entry name" value="14-3-3 protein"/>
    <property type="match status" value="1"/>
</dbReference>
<dbReference type="PROSITE" id="PS00796">
    <property type="entry name" value="1433_1"/>
    <property type="match status" value="1"/>
</dbReference>
<dbReference type="PROSITE" id="PS00797">
    <property type="entry name" value="1433_2"/>
    <property type="match status" value="1"/>
</dbReference>
<name>14331_ECHMU</name>
<organism>
    <name type="scientific">Echinococcus multilocularis</name>
    <name type="common">Fox tapeworm</name>
    <dbReference type="NCBI Taxonomy" id="6211"/>
    <lineage>
        <taxon>Eukaryota</taxon>
        <taxon>Metazoa</taxon>
        <taxon>Spiralia</taxon>
        <taxon>Lophotrochozoa</taxon>
        <taxon>Platyhelminthes</taxon>
        <taxon>Cestoda</taxon>
        <taxon>Eucestoda</taxon>
        <taxon>Cyclophyllidea</taxon>
        <taxon>Taeniidae</taxon>
        <taxon>Echinococcus</taxon>
    </lineage>
</organism>
<feature type="chain" id="PRO_0000058653" description="14-3-3 protein homolog 1">
    <location>
        <begin position="1"/>
        <end position="244"/>
    </location>
</feature>
<reference key="1">
    <citation type="journal article" date="1998" name="Mol. Biochem. Parasitol.">
        <title>Stage-specific expression of the 14-3-3 gene in Echinococcus multilocularis.</title>
        <authorList>
            <person name="Siles-Lucas M."/>
            <person name="Felleisen R.S."/>
            <person name="Hemphill A."/>
            <person name="Wilson W."/>
            <person name="Gottstein B."/>
        </authorList>
    </citation>
    <scope>NUCLEOTIDE SEQUENCE [MRNA]</scope>
</reference>
<comment type="similarity">
    <text evidence="1">Belongs to the 14-3-3 family.</text>
</comment>
<protein>
    <recommendedName>
        <fullName>14-3-3 protein homolog 1</fullName>
    </recommendedName>
    <alternativeName>
        <fullName>Emma14-3-3.1</fullName>
    </alternativeName>
</protein>
<accession>Q24902</accession>
<proteinExistence type="evidence at transcript level"/>